<gene>
    <name evidence="1" type="primary">fdhE</name>
    <name type="ordered locus">Shew185_0103</name>
</gene>
<sequence>MSHTAEIPLVPGSESPLELKPLKAADPQAVYHRRAHRLLSLAKDSPLADYFELCRRLVSIQAKLAEEADFGQLLAWGKDEATPLSLLGSEADSYWQGLLQQLLSDLLPQVDESIARVMRLLMQQSPEQLSSWGRSLRQGHVSEVPAHFSLFIWAAMGVYWSHWAPMVIKRMDQRKVAQQSMCPVCGCHPVASVIVDQPRAGLRYLHCSLCESEWHYIRAHCTSCGQDKEMTIWSLDDAQAQVRIESCDECHGYTKMMFVENSPSMDVAADDLATLMLDSELNAKGFGATTLNPLLMAHETT</sequence>
<protein>
    <recommendedName>
        <fullName evidence="1">Protein FdhE homolog</fullName>
    </recommendedName>
</protein>
<reference key="1">
    <citation type="submission" date="2007-07" db="EMBL/GenBank/DDBJ databases">
        <title>Complete sequence of chromosome of Shewanella baltica OS185.</title>
        <authorList>
            <consortium name="US DOE Joint Genome Institute"/>
            <person name="Copeland A."/>
            <person name="Lucas S."/>
            <person name="Lapidus A."/>
            <person name="Barry K."/>
            <person name="Glavina del Rio T."/>
            <person name="Dalin E."/>
            <person name="Tice H."/>
            <person name="Pitluck S."/>
            <person name="Sims D."/>
            <person name="Brettin T."/>
            <person name="Bruce D."/>
            <person name="Detter J.C."/>
            <person name="Han C."/>
            <person name="Schmutz J."/>
            <person name="Larimer F."/>
            <person name="Land M."/>
            <person name="Hauser L."/>
            <person name="Kyrpides N."/>
            <person name="Mikhailova N."/>
            <person name="Brettar I."/>
            <person name="Rodrigues J."/>
            <person name="Konstantinidis K."/>
            <person name="Tiedje J."/>
            <person name="Richardson P."/>
        </authorList>
    </citation>
    <scope>NUCLEOTIDE SEQUENCE [LARGE SCALE GENOMIC DNA]</scope>
    <source>
        <strain>OS185</strain>
    </source>
</reference>
<accession>A6WHI5</accession>
<dbReference type="EMBL" id="CP000753">
    <property type="protein sequence ID" value="ABS06274.1"/>
    <property type="molecule type" value="Genomic_DNA"/>
</dbReference>
<dbReference type="RefSeq" id="WP_011982055.1">
    <property type="nucleotide sequence ID" value="NC_009665.1"/>
</dbReference>
<dbReference type="SMR" id="A6WHI5"/>
<dbReference type="KEGG" id="sbm:Shew185_0103"/>
<dbReference type="HOGENOM" id="CLU_055275_0_0_6"/>
<dbReference type="GO" id="GO:0005829">
    <property type="term" value="C:cytosol"/>
    <property type="evidence" value="ECO:0007669"/>
    <property type="project" value="TreeGrafter"/>
</dbReference>
<dbReference type="GO" id="GO:0008199">
    <property type="term" value="F:ferric iron binding"/>
    <property type="evidence" value="ECO:0007669"/>
    <property type="project" value="TreeGrafter"/>
</dbReference>
<dbReference type="GO" id="GO:0051604">
    <property type="term" value="P:protein maturation"/>
    <property type="evidence" value="ECO:0007669"/>
    <property type="project" value="TreeGrafter"/>
</dbReference>
<dbReference type="CDD" id="cd16341">
    <property type="entry name" value="FdhE"/>
    <property type="match status" value="1"/>
</dbReference>
<dbReference type="Gene3D" id="3.90.1670.10">
    <property type="entry name" value="FdhE-like domain"/>
    <property type="match status" value="1"/>
</dbReference>
<dbReference type="HAMAP" id="MF_00611">
    <property type="entry name" value="FdeH"/>
    <property type="match status" value="1"/>
</dbReference>
<dbReference type="InterPro" id="IPR024064">
    <property type="entry name" value="FdhE-like_sf"/>
</dbReference>
<dbReference type="InterPro" id="IPR056796">
    <property type="entry name" value="FdhE_C"/>
</dbReference>
<dbReference type="InterPro" id="IPR056797">
    <property type="entry name" value="FdhE_central"/>
</dbReference>
<dbReference type="InterPro" id="IPR056774">
    <property type="entry name" value="FdhE_N"/>
</dbReference>
<dbReference type="InterPro" id="IPR006452">
    <property type="entry name" value="Formate_DH_accessory"/>
</dbReference>
<dbReference type="NCBIfam" id="TIGR01562">
    <property type="entry name" value="FdhE"/>
    <property type="match status" value="1"/>
</dbReference>
<dbReference type="PANTHER" id="PTHR37689">
    <property type="entry name" value="PROTEIN FDHE"/>
    <property type="match status" value="1"/>
</dbReference>
<dbReference type="PANTHER" id="PTHR37689:SF1">
    <property type="entry name" value="PROTEIN FDHE"/>
    <property type="match status" value="1"/>
</dbReference>
<dbReference type="Pfam" id="PF24860">
    <property type="entry name" value="FdhE_C"/>
    <property type="match status" value="1"/>
</dbReference>
<dbReference type="Pfam" id="PF24859">
    <property type="entry name" value="FdhE_central"/>
    <property type="match status" value="1"/>
</dbReference>
<dbReference type="Pfam" id="PF04216">
    <property type="entry name" value="FdhE_N"/>
    <property type="match status" value="1"/>
</dbReference>
<dbReference type="PIRSF" id="PIRSF018296">
    <property type="entry name" value="Format_dh_formtn"/>
    <property type="match status" value="1"/>
</dbReference>
<dbReference type="SUPFAM" id="SSF144020">
    <property type="entry name" value="FdhE-like"/>
    <property type="match status" value="1"/>
</dbReference>
<name>FDHE_SHEB8</name>
<comment type="function">
    <text evidence="1">Necessary for formate dehydrogenase activity.</text>
</comment>
<comment type="subcellular location">
    <subcellularLocation>
        <location evidence="1">Cytoplasm</location>
    </subcellularLocation>
</comment>
<comment type="similarity">
    <text evidence="1">Belongs to the FdhE family.</text>
</comment>
<evidence type="ECO:0000255" key="1">
    <source>
        <dbReference type="HAMAP-Rule" id="MF_00611"/>
    </source>
</evidence>
<organism>
    <name type="scientific">Shewanella baltica (strain OS185)</name>
    <dbReference type="NCBI Taxonomy" id="402882"/>
    <lineage>
        <taxon>Bacteria</taxon>
        <taxon>Pseudomonadati</taxon>
        <taxon>Pseudomonadota</taxon>
        <taxon>Gammaproteobacteria</taxon>
        <taxon>Alteromonadales</taxon>
        <taxon>Shewanellaceae</taxon>
        <taxon>Shewanella</taxon>
    </lineage>
</organism>
<proteinExistence type="inferred from homology"/>
<keyword id="KW-0963">Cytoplasm</keyword>
<feature type="chain" id="PRO_1000056711" description="Protein FdhE homolog">
    <location>
        <begin position="1"/>
        <end position="301"/>
    </location>
</feature>